<keyword id="KW-0325">Glycoprotein</keyword>
<keyword id="KW-0378">Hydrolase</keyword>
<keyword id="KW-0472">Membrane</keyword>
<keyword id="KW-0479">Metal-binding</keyword>
<keyword id="KW-0482">Metalloprotease</keyword>
<keyword id="KW-0645">Protease</keyword>
<keyword id="KW-1185">Reference proteome</keyword>
<keyword id="KW-0812">Transmembrane</keyword>
<keyword id="KW-1133">Transmembrane helix</keyword>
<keyword id="KW-0926">Vacuole</keyword>
<keyword id="KW-0862">Zinc</keyword>
<evidence type="ECO:0000250" key="1">
    <source>
        <dbReference type="UniProtKB" id="P38244"/>
    </source>
</evidence>
<evidence type="ECO:0000250" key="2">
    <source>
        <dbReference type="UniProtKB" id="P80561"/>
    </source>
</evidence>
<evidence type="ECO:0000255" key="3"/>
<evidence type="ECO:0000255" key="4">
    <source>
        <dbReference type="PROSITE-ProRule" id="PRU00498"/>
    </source>
</evidence>
<evidence type="ECO:0000256" key="5">
    <source>
        <dbReference type="SAM" id="MobiDB-lite"/>
    </source>
</evidence>
<evidence type="ECO:0000305" key="6"/>
<dbReference type="EC" id="3.4.-.-" evidence="6"/>
<dbReference type="EMBL" id="AACD01000068">
    <property type="protein sequence ID" value="EAA59299.1"/>
    <property type="status" value="ALT_SEQ"/>
    <property type="molecule type" value="Genomic_DNA"/>
</dbReference>
<dbReference type="EMBL" id="BN001302">
    <property type="protein sequence ID" value="CBF74498.1"/>
    <property type="molecule type" value="Genomic_DNA"/>
</dbReference>
<dbReference type="RefSeq" id="XP_661804.1">
    <property type="nucleotide sequence ID" value="XM_656712.1"/>
</dbReference>
<dbReference type="SMR" id="C8V4D5"/>
<dbReference type="FunCoup" id="C8V4D5">
    <property type="interactions" value="5"/>
</dbReference>
<dbReference type="STRING" id="227321.C8V4D5"/>
<dbReference type="EnsemblFungi" id="CBF74498">
    <property type="protein sequence ID" value="CBF74498"/>
    <property type="gene ID" value="ANIA_10522"/>
</dbReference>
<dbReference type="VEuPathDB" id="FungiDB:AN10522"/>
<dbReference type="eggNOG" id="KOG2194">
    <property type="taxonomic scope" value="Eukaryota"/>
</dbReference>
<dbReference type="HOGENOM" id="CLU_003436_0_0_1"/>
<dbReference type="InParanoid" id="C8V4D5"/>
<dbReference type="OMA" id="TPWPVTI"/>
<dbReference type="OrthoDB" id="10257471at2759"/>
<dbReference type="Proteomes" id="UP000000560">
    <property type="component" value="Chromosome II"/>
</dbReference>
<dbReference type="GO" id="GO:0005774">
    <property type="term" value="C:vacuolar membrane"/>
    <property type="evidence" value="ECO:0007669"/>
    <property type="project" value="UniProtKB-SubCell"/>
</dbReference>
<dbReference type="GO" id="GO:0046872">
    <property type="term" value="F:metal ion binding"/>
    <property type="evidence" value="ECO:0007669"/>
    <property type="project" value="UniProtKB-KW"/>
</dbReference>
<dbReference type="GO" id="GO:0008235">
    <property type="term" value="F:metalloexopeptidase activity"/>
    <property type="evidence" value="ECO:0007669"/>
    <property type="project" value="InterPro"/>
</dbReference>
<dbReference type="GO" id="GO:0006508">
    <property type="term" value="P:proteolysis"/>
    <property type="evidence" value="ECO:0000318"/>
    <property type="project" value="GO_Central"/>
</dbReference>
<dbReference type="CDD" id="cd03875">
    <property type="entry name" value="M28_Fxna_like"/>
    <property type="match status" value="1"/>
</dbReference>
<dbReference type="FunFam" id="3.40.630.10:FF:000057">
    <property type="entry name" value="Vacuolar membrane protease"/>
    <property type="match status" value="1"/>
</dbReference>
<dbReference type="Gene3D" id="3.40.630.10">
    <property type="entry name" value="Zn peptidases"/>
    <property type="match status" value="1"/>
</dbReference>
<dbReference type="InterPro" id="IPR048024">
    <property type="entry name" value="Fxna-like_M28_dom"/>
</dbReference>
<dbReference type="InterPro" id="IPR045175">
    <property type="entry name" value="M28_fam"/>
</dbReference>
<dbReference type="InterPro" id="IPR007484">
    <property type="entry name" value="Peptidase_M28"/>
</dbReference>
<dbReference type="InterPro" id="IPR053975">
    <property type="entry name" value="PFF1_C"/>
</dbReference>
<dbReference type="InterPro" id="IPR053976">
    <property type="entry name" value="PFF1_TM"/>
</dbReference>
<dbReference type="PANTHER" id="PTHR12147">
    <property type="entry name" value="METALLOPEPTIDASE M28 FAMILY MEMBER"/>
    <property type="match status" value="1"/>
</dbReference>
<dbReference type="PANTHER" id="PTHR12147:SF58">
    <property type="entry name" value="VACUOLAR MEMBRANE PROTEASE"/>
    <property type="match status" value="1"/>
</dbReference>
<dbReference type="Pfam" id="PF04389">
    <property type="entry name" value="Peptidase_M28"/>
    <property type="match status" value="1"/>
</dbReference>
<dbReference type="Pfam" id="PF22250">
    <property type="entry name" value="PFF1_C"/>
    <property type="match status" value="1"/>
</dbReference>
<dbReference type="Pfam" id="PF22251">
    <property type="entry name" value="PFF1_TM"/>
    <property type="match status" value="1"/>
</dbReference>
<dbReference type="SUPFAM" id="SSF53187">
    <property type="entry name" value="Zn-dependent exopeptidases"/>
    <property type="match status" value="1"/>
</dbReference>
<protein>
    <recommendedName>
        <fullName evidence="1">Vacuolar membrane protease</fullName>
        <ecNumber evidence="6">3.4.-.-</ecNumber>
    </recommendedName>
    <alternativeName>
        <fullName evidence="1">FXNA-related family protease 1</fullName>
    </alternativeName>
</protein>
<feature type="chain" id="PRO_0000413172" description="Vacuolar membrane protease">
    <location>
        <begin position="1"/>
        <end position="953"/>
    </location>
</feature>
<feature type="topological domain" description="Cytoplasmic" evidence="1">
    <location>
        <begin position="1"/>
        <end position="16"/>
    </location>
</feature>
<feature type="transmembrane region" description="Helical; Name=1" evidence="3">
    <location>
        <begin position="17"/>
        <end position="37"/>
    </location>
</feature>
<feature type="topological domain" description="Vacuolar" evidence="1">
    <location>
        <begin position="38"/>
        <end position="382"/>
    </location>
</feature>
<feature type="transmembrane region" description="Helical; Name=2" evidence="3">
    <location>
        <begin position="383"/>
        <end position="403"/>
    </location>
</feature>
<feature type="topological domain" description="Cytoplasmic" evidence="1">
    <location>
        <begin position="404"/>
        <end position="437"/>
    </location>
</feature>
<feature type="transmembrane region" description="Helical; Name=3" evidence="3">
    <location>
        <begin position="438"/>
        <end position="458"/>
    </location>
</feature>
<feature type="topological domain" description="Vacuolar" evidence="1">
    <location>
        <begin position="459"/>
        <end position="464"/>
    </location>
</feature>
<feature type="transmembrane region" description="Helical; Name=4" evidence="3">
    <location>
        <begin position="465"/>
        <end position="485"/>
    </location>
</feature>
<feature type="topological domain" description="Cytoplasmic" evidence="1">
    <location>
        <begin position="486"/>
        <end position="499"/>
    </location>
</feature>
<feature type="transmembrane region" description="Helical; Name=5" evidence="3">
    <location>
        <begin position="500"/>
        <end position="520"/>
    </location>
</feature>
<feature type="topological domain" description="Vacuolar" evidence="1">
    <location>
        <begin position="521"/>
        <end position="524"/>
    </location>
</feature>
<feature type="transmembrane region" description="Helical; Name=6" evidence="3">
    <location>
        <begin position="525"/>
        <end position="545"/>
    </location>
</feature>
<feature type="topological domain" description="Cytoplasmic" evidence="1">
    <location>
        <begin position="546"/>
        <end position="650"/>
    </location>
</feature>
<feature type="transmembrane region" description="Helical; Name=7" evidence="3">
    <location>
        <begin position="651"/>
        <end position="671"/>
    </location>
</feature>
<feature type="topological domain" description="Vacuolar" evidence="1">
    <location>
        <begin position="672"/>
        <end position="684"/>
    </location>
</feature>
<feature type="transmembrane region" description="Helical; Name=8" evidence="3">
    <location>
        <begin position="685"/>
        <end position="705"/>
    </location>
</feature>
<feature type="topological domain" description="Cytoplasmic" evidence="1">
    <location>
        <begin position="706"/>
        <end position="711"/>
    </location>
</feature>
<feature type="transmembrane region" description="Helical; Name=9" evidence="3">
    <location>
        <begin position="712"/>
        <end position="732"/>
    </location>
</feature>
<feature type="topological domain" description="Vacuolar" evidence="1">
    <location>
        <begin position="733"/>
        <end position="953"/>
    </location>
</feature>
<feature type="region of interest" description="Disordered" evidence="5">
    <location>
        <begin position="570"/>
        <end position="599"/>
    </location>
</feature>
<feature type="compositionally biased region" description="Acidic residues" evidence="5">
    <location>
        <begin position="581"/>
        <end position="591"/>
    </location>
</feature>
<feature type="active site" description="Proton acceptor" evidence="2">
    <location>
        <position position="211"/>
    </location>
</feature>
<feature type="binding site" evidence="2">
    <location>
        <position position="165"/>
    </location>
    <ligand>
        <name>Zn(2+)</name>
        <dbReference type="ChEBI" id="CHEBI:29105"/>
        <label>1</label>
        <note>catalytic</note>
    </ligand>
</feature>
<feature type="binding site" evidence="2">
    <location>
        <position position="177"/>
    </location>
    <ligand>
        <name>Zn(2+)</name>
        <dbReference type="ChEBI" id="CHEBI:29105"/>
        <label>1</label>
        <note>catalytic</note>
    </ligand>
</feature>
<feature type="binding site" evidence="2">
    <location>
        <position position="177"/>
    </location>
    <ligand>
        <name>Zn(2+)</name>
        <dbReference type="ChEBI" id="CHEBI:29105"/>
        <label>2</label>
        <note>catalytic</note>
    </ligand>
</feature>
<feature type="binding site" evidence="2">
    <location>
        <position position="212"/>
    </location>
    <ligand>
        <name>Zn(2+)</name>
        <dbReference type="ChEBI" id="CHEBI:29105"/>
        <label>2</label>
        <note>catalytic</note>
    </ligand>
</feature>
<feature type="binding site" evidence="2">
    <location>
        <position position="237"/>
    </location>
    <ligand>
        <name>Zn(2+)</name>
        <dbReference type="ChEBI" id="CHEBI:29105"/>
        <label>1</label>
        <note>catalytic</note>
    </ligand>
</feature>
<feature type="binding site" evidence="2">
    <location>
        <position position="310"/>
    </location>
    <ligand>
        <name>Zn(2+)</name>
        <dbReference type="ChEBI" id="CHEBI:29105"/>
        <label>2</label>
        <note>catalytic</note>
    </ligand>
</feature>
<feature type="site" description="Transition state stabilizer" evidence="2">
    <location>
        <position position="309"/>
    </location>
</feature>
<feature type="glycosylation site" description="N-linked (GlcNAc...) asparagine" evidence="4">
    <location>
        <position position="53"/>
    </location>
</feature>
<feature type="glycosylation site" description="N-linked (GlcNAc...) asparagine" evidence="4">
    <location>
        <position position="115"/>
    </location>
</feature>
<feature type="glycosylation site" description="N-linked (GlcNAc...) asparagine" evidence="4">
    <location>
        <position position="779"/>
    </location>
</feature>
<name>PFF1_EMENI</name>
<comment type="function">
    <text evidence="1">May be involved in vacuolar sorting and osmoregulation.</text>
</comment>
<comment type="cofactor">
    <cofactor evidence="2">
        <name>Zn(2+)</name>
        <dbReference type="ChEBI" id="CHEBI:29105"/>
    </cofactor>
    <text evidence="2">Binds 2 Zn(2+) ions per subunit.</text>
</comment>
<comment type="subcellular location">
    <subcellularLocation>
        <location evidence="1">Vacuole membrane</location>
        <topology evidence="3">Multi-pass membrane protein</topology>
    </subcellularLocation>
</comment>
<comment type="similarity">
    <text evidence="6">Belongs to the peptidase M28 family.</text>
</comment>
<comment type="sequence caution" evidence="6">
    <conflict type="erroneous gene model prediction">
        <sequence resource="EMBL-CDS" id="EAA59299"/>
    </conflict>
    <text>The predicted gene AN4200 has been split into 2 genes: AN10516 and AN10522.</text>
</comment>
<gene>
    <name type="ORF">AN10522</name>
</gene>
<proteinExistence type="inferred from homology"/>
<sequence>MDQTKPPRRNPLAFTPWPVTLITAVVYLAFVIPLLVIHHVVPSAPTSSPDGLNITEAWNDLQVLTAGYRPYNSRQNDKIHDWLLHRINEILGAAPPATTDEKKPDVFVFDDTRSNLTFARDNLAVYFEGTNILVYIRGEDDDQEQWWELPEGSPKGKGGVLVNAHYDSVSTGYGATDDGVGVVTCLQLVKYFTTPKNAPRKGLVVLFNNGEEDFLNGARVYSQHPLSRFPHTFLNLEGAGAGGRAVLFRSSDAEVAASYMRSKHPFGSVLGSDGFKAGLIRSQTDYVVFEGDMGLRGLDVAFLEPRARYHTDQDDTRHTSKDSLWHMLSTAVATTEDLVSDTSDRFDGPARNDHKIASGTGHQAVWFDLYGSTFVLFRLHTLFALSVTLLVVAPIVLLLTSIILTKVDKMYLFRTSIRPEGSLEVLPLYGDRGVIRYPFLLGIPTAVTIGLAYLLTKFNPYIVHSSQYAVWSMMVSVWIFLAWFVSRVADFARPSAFHRVYTLTWTFVVMWVLQVIATVYQDRWALGGSYFIFFAYAGTFLATWISYLELFALPRKSEYANHLRPVSRHASSHSSRRGLSEEDEEDEDEAPTESTSLLGSRQRTTFANYVRVNADTADLSDSEEHTQDVNVYGLEQRWSASLPKWLWLLQFLLAAPIVLILVGPIALLLTGSLHQTGQDGSSSLFIYIAIVALTTLLLSPMLPFVHRCTYHIPLFMLAVFAGTLIYNLVAFPFSDSNRLKLFFIQEVDLDTGLNTASLTGVQPFVHDVAVGLPSAAGQNVTCGPFGDRFKCSWTGIPPHVLTEDKPVEEWLSFEVSRSIDKPRHAQLQISGQNTRACKVVFDSPIKNFHVAGSAYDPRFPHTYAKGIKEIRLWSRVWDNTWTVDVEWFNPDSSSDHSKTSGSLTGQVVCLWSDYNQPGTIPALDEVRQYGPAWIGVSKLADGLVEGRKSFEIA</sequence>
<organism>
    <name type="scientific">Emericella nidulans (strain FGSC A4 / ATCC 38163 / CBS 112.46 / NRRL 194 / M139)</name>
    <name type="common">Aspergillus nidulans</name>
    <dbReference type="NCBI Taxonomy" id="227321"/>
    <lineage>
        <taxon>Eukaryota</taxon>
        <taxon>Fungi</taxon>
        <taxon>Dikarya</taxon>
        <taxon>Ascomycota</taxon>
        <taxon>Pezizomycotina</taxon>
        <taxon>Eurotiomycetes</taxon>
        <taxon>Eurotiomycetidae</taxon>
        <taxon>Eurotiales</taxon>
        <taxon>Aspergillaceae</taxon>
        <taxon>Aspergillus</taxon>
        <taxon>Aspergillus subgen. Nidulantes</taxon>
    </lineage>
</organism>
<reference key="1">
    <citation type="journal article" date="2005" name="Nature">
        <title>Sequencing of Aspergillus nidulans and comparative analysis with A. fumigatus and A. oryzae.</title>
        <authorList>
            <person name="Galagan J.E."/>
            <person name="Calvo S.E."/>
            <person name="Cuomo C."/>
            <person name="Ma L.-J."/>
            <person name="Wortman J.R."/>
            <person name="Batzoglou S."/>
            <person name="Lee S.-I."/>
            <person name="Bastuerkmen M."/>
            <person name="Spevak C.C."/>
            <person name="Clutterbuck J."/>
            <person name="Kapitonov V."/>
            <person name="Jurka J."/>
            <person name="Scazzocchio C."/>
            <person name="Farman M.L."/>
            <person name="Butler J."/>
            <person name="Purcell S."/>
            <person name="Harris S."/>
            <person name="Braus G.H."/>
            <person name="Draht O."/>
            <person name="Busch S."/>
            <person name="D'Enfert C."/>
            <person name="Bouchier C."/>
            <person name="Goldman G.H."/>
            <person name="Bell-Pedersen D."/>
            <person name="Griffiths-Jones S."/>
            <person name="Doonan J.H."/>
            <person name="Yu J."/>
            <person name="Vienken K."/>
            <person name="Pain A."/>
            <person name="Freitag M."/>
            <person name="Selker E.U."/>
            <person name="Archer D.B."/>
            <person name="Penalva M.A."/>
            <person name="Oakley B.R."/>
            <person name="Momany M."/>
            <person name="Tanaka T."/>
            <person name="Kumagai T."/>
            <person name="Asai K."/>
            <person name="Machida M."/>
            <person name="Nierman W.C."/>
            <person name="Denning D.W."/>
            <person name="Caddick M.X."/>
            <person name="Hynes M."/>
            <person name="Paoletti M."/>
            <person name="Fischer R."/>
            <person name="Miller B.L."/>
            <person name="Dyer P.S."/>
            <person name="Sachs M.S."/>
            <person name="Osmani S.A."/>
            <person name="Birren B.W."/>
        </authorList>
    </citation>
    <scope>NUCLEOTIDE SEQUENCE [LARGE SCALE GENOMIC DNA]</scope>
    <source>
        <strain>FGSC A4 / ATCC 38163 / CBS 112.46 / NRRL 194 / M139</strain>
    </source>
</reference>
<reference key="2">
    <citation type="journal article" date="2009" name="Fungal Genet. Biol.">
        <title>The 2008 update of the Aspergillus nidulans genome annotation: a community effort.</title>
        <authorList>
            <person name="Wortman J.R."/>
            <person name="Gilsenan J.M."/>
            <person name="Joardar V."/>
            <person name="Deegan J."/>
            <person name="Clutterbuck J."/>
            <person name="Andersen M.R."/>
            <person name="Archer D."/>
            <person name="Bencina M."/>
            <person name="Braus G."/>
            <person name="Coutinho P."/>
            <person name="von Dohren H."/>
            <person name="Doonan J."/>
            <person name="Driessen A.J."/>
            <person name="Durek P."/>
            <person name="Espeso E."/>
            <person name="Fekete E."/>
            <person name="Flipphi M."/>
            <person name="Estrada C.G."/>
            <person name="Geysens S."/>
            <person name="Goldman G."/>
            <person name="de Groot P.W."/>
            <person name="Hansen K."/>
            <person name="Harris S.D."/>
            <person name="Heinekamp T."/>
            <person name="Helmstaedt K."/>
            <person name="Henrissat B."/>
            <person name="Hofmann G."/>
            <person name="Homan T."/>
            <person name="Horio T."/>
            <person name="Horiuchi H."/>
            <person name="James S."/>
            <person name="Jones M."/>
            <person name="Karaffa L."/>
            <person name="Karanyi Z."/>
            <person name="Kato M."/>
            <person name="Keller N."/>
            <person name="Kelly D.E."/>
            <person name="Kiel J.A."/>
            <person name="Kim J.M."/>
            <person name="van der Klei I.J."/>
            <person name="Klis F.M."/>
            <person name="Kovalchuk A."/>
            <person name="Krasevec N."/>
            <person name="Kubicek C.P."/>
            <person name="Liu B."/>
            <person name="Maccabe A."/>
            <person name="Meyer V."/>
            <person name="Mirabito P."/>
            <person name="Miskei M."/>
            <person name="Mos M."/>
            <person name="Mullins J."/>
            <person name="Nelson D.R."/>
            <person name="Nielsen J."/>
            <person name="Oakley B.R."/>
            <person name="Osmani S.A."/>
            <person name="Pakula T."/>
            <person name="Paszewski A."/>
            <person name="Paulsen I."/>
            <person name="Pilsyk S."/>
            <person name="Pocsi I."/>
            <person name="Punt P.J."/>
            <person name="Ram A.F."/>
            <person name="Ren Q."/>
            <person name="Robellet X."/>
            <person name="Robson G."/>
            <person name="Seiboth B."/>
            <person name="van Solingen P."/>
            <person name="Specht T."/>
            <person name="Sun J."/>
            <person name="Taheri-Talesh N."/>
            <person name="Takeshita N."/>
            <person name="Ussery D."/>
            <person name="vanKuyk P.A."/>
            <person name="Visser H."/>
            <person name="van de Vondervoort P.J."/>
            <person name="de Vries R.P."/>
            <person name="Walton J."/>
            <person name="Xiang X."/>
            <person name="Xiong Y."/>
            <person name="Zeng A.P."/>
            <person name="Brandt B.W."/>
            <person name="Cornell M.J."/>
            <person name="van den Hondel C.A."/>
            <person name="Visser J."/>
            <person name="Oliver S.G."/>
            <person name="Turner G."/>
        </authorList>
    </citation>
    <scope>GENOME REANNOTATION</scope>
    <source>
        <strain>FGSC A4 / ATCC 38163 / CBS 112.46 / NRRL 194 / M139</strain>
    </source>
</reference>
<accession>C8V4D5</accession>
<accession>Q15I80</accession>
<accession>Q5B5I0</accession>